<protein>
    <recommendedName>
        <fullName>UDP-glycosyltransferase 73C4</fullName>
        <ecNumber>2.4.1.-</ecNumber>
    </recommendedName>
</protein>
<reference key="1">
    <citation type="journal article" date="1999" name="Nature">
        <title>Sequence and analysis of chromosome 2 of the plant Arabidopsis thaliana.</title>
        <authorList>
            <person name="Lin X."/>
            <person name="Kaul S."/>
            <person name="Rounsley S.D."/>
            <person name="Shea T.P."/>
            <person name="Benito M.-I."/>
            <person name="Town C.D."/>
            <person name="Fujii C.Y."/>
            <person name="Mason T.M."/>
            <person name="Bowman C.L."/>
            <person name="Barnstead M.E."/>
            <person name="Feldblyum T.V."/>
            <person name="Buell C.R."/>
            <person name="Ketchum K.A."/>
            <person name="Lee J.J."/>
            <person name="Ronning C.M."/>
            <person name="Koo H.L."/>
            <person name="Moffat K.S."/>
            <person name="Cronin L.A."/>
            <person name="Shen M."/>
            <person name="Pai G."/>
            <person name="Van Aken S."/>
            <person name="Umayam L."/>
            <person name="Tallon L.J."/>
            <person name="Gill J.E."/>
            <person name="Adams M.D."/>
            <person name="Carrera A.J."/>
            <person name="Creasy T.H."/>
            <person name="Goodman H.M."/>
            <person name="Somerville C.R."/>
            <person name="Copenhaver G.P."/>
            <person name="Preuss D."/>
            <person name="Nierman W.C."/>
            <person name="White O."/>
            <person name="Eisen J.A."/>
            <person name="Salzberg S.L."/>
            <person name="Fraser C.M."/>
            <person name="Venter J.C."/>
        </authorList>
    </citation>
    <scope>NUCLEOTIDE SEQUENCE [LARGE SCALE GENOMIC DNA]</scope>
    <source>
        <strain>cv. Columbia</strain>
    </source>
</reference>
<reference key="2">
    <citation type="journal article" date="2017" name="Plant J.">
        <title>Araport11: a complete reannotation of the Arabidopsis thaliana reference genome.</title>
        <authorList>
            <person name="Cheng C.Y."/>
            <person name="Krishnakumar V."/>
            <person name="Chan A.P."/>
            <person name="Thibaud-Nissen F."/>
            <person name="Schobel S."/>
            <person name="Town C.D."/>
        </authorList>
    </citation>
    <scope>GENOME REANNOTATION</scope>
    <source>
        <strain>cv. Columbia</strain>
    </source>
</reference>
<reference key="3">
    <citation type="journal article" date="2003" name="Science">
        <title>Empirical analysis of transcriptional activity in the Arabidopsis genome.</title>
        <authorList>
            <person name="Yamada K."/>
            <person name="Lim J."/>
            <person name="Dale J.M."/>
            <person name="Chen H."/>
            <person name="Shinn P."/>
            <person name="Palm C.J."/>
            <person name="Southwick A.M."/>
            <person name="Wu H.C."/>
            <person name="Kim C.J."/>
            <person name="Nguyen M."/>
            <person name="Pham P.K."/>
            <person name="Cheuk R.F."/>
            <person name="Karlin-Newmann G."/>
            <person name="Liu S.X."/>
            <person name="Lam B."/>
            <person name="Sakano H."/>
            <person name="Wu T."/>
            <person name="Yu G."/>
            <person name="Miranda M."/>
            <person name="Quach H.L."/>
            <person name="Tripp M."/>
            <person name="Chang C.H."/>
            <person name="Lee J.M."/>
            <person name="Toriumi M.J."/>
            <person name="Chan M.M."/>
            <person name="Tang C.C."/>
            <person name="Onodera C.S."/>
            <person name="Deng J.M."/>
            <person name="Akiyama K."/>
            <person name="Ansari Y."/>
            <person name="Arakawa T."/>
            <person name="Banh J."/>
            <person name="Banno F."/>
            <person name="Bowser L."/>
            <person name="Brooks S.Y."/>
            <person name="Carninci P."/>
            <person name="Chao Q."/>
            <person name="Choy N."/>
            <person name="Enju A."/>
            <person name="Goldsmith A.D."/>
            <person name="Gurjal M."/>
            <person name="Hansen N.F."/>
            <person name="Hayashizaki Y."/>
            <person name="Johnson-Hopson C."/>
            <person name="Hsuan V.W."/>
            <person name="Iida K."/>
            <person name="Karnes M."/>
            <person name="Khan S."/>
            <person name="Koesema E."/>
            <person name="Ishida J."/>
            <person name="Jiang P.X."/>
            <person name="Jones T."/>
            <person name="Kawai J."/>
            <person name="Kamiya A."/>
            <person name="Meyers C."/>
            <person name="Nakajima M."/>
            <person name="Narusaka M."/>
            <person name="Seki M."/>
            <person name="Sakurai T."/>
            <person name="Satou M."/>
            <person name="Tamse R."/>
            <person name="Vaysberg M."/>
            <person name="Wallender E.K."/>
            <person name="Wong C."/>
            <person name="Yamamura Y."/>
            <person name="Yuan S."/>
            <person name="Shinozaki K."/>
            <person name="Davis R.W."/>
            <person name="Theologis A."/>
            <person name="Ecker J.R."/>
        </authorList>
    </citation>
    <scope>NUCLEOTIDE SEQUENCE [LARGE SCALE MRNA]</scope>
    <source>
        <strain>cv. Columbia</strain>
    </source>
</reference>
<reference key="4">
    <citation type="journal article" date="2001" name="J. Biol. Chem.">
        <title>Phylogenetic analysis of the UDP-glycosyltransferase multigene family of Arabidopsis thaliana.</title>
        <authorList>
            <person name="Li Y."/>
            <person name="Baldauf S."/>
            <person name="Lim E.K."/>
            <person name="Bowles D.J."/>
        </authorList>
    </citation>
    <scope>GENE FAMILY</scope>
</reference>
<organism>
    <name type="scientific">Arabidopsis thaliana</name>
    <name type="common">Mouse-ear cress</name>
    <dbReference type="NCBI Taxonomy" id="3702"/>
    <lineage>
        <taxon>Eukaryota</taxon>
        <taxon>Viridiplantae</taxon>
        <taxon>Streptophyta</taxon>
        <taxon>Embryophyta</taxon>
        <taxon>Tracheophyta</taxon>
        <taxon>Spermatophyta</taxon>
        <taxon>Magnoliopsida</taxon>
        <taxon>eudicotyledons</taxon>
        <taxon>Gunneridae</taxon>
        <taxon>Pentapetalae</taxon>
        <taxon>rosids</taxon>
        <taxon>malvids</taxon>
        <taxon>Brassicales</taxon>
        <taxon>Brassicaceae</taxon>
        <taxon>Camelineae</taxon>
        <taxon>Arabidopsis</taxon>
    </lineage>
</organism>
<sequence length="496" mass="55907">MASEKSHKVHPPLHFILFPFMAQGHMIPMIDIARLLAQRGATVTIVTTRYNAGRFENVLSRAMESGLPINIVHVNFPYQEFGLPEGKENIDSYDSMELMVPFFQAVNMLEDPVMKLMEEMKPRPSCIISDLLLPYTSKIARKFSIPKIVFHGTGCFNLLCMHVLRRNLEILKNLKSDKDYFLVPSFPDRVEFTKPQVPVETTASGDWKAFLDEMVEAEYTSYGVIVNTFQELEPAYVKDYTKARAGKVWSIGPVSLCNKAGADKAERGNQAAIDQDECLQWLDSKEDGSVLYVCLGSICNLPLSQLKELGLGLEKSQRSFIWVIRGWEKYNELYEWMMESGFEERIKERGLLIKGWSPQVLILSHPSVGGFLTHCGWNSTLEGITSGIPLITWPLFGDQFCNQKLVVQVLKAGVSAGVEEVMKWGEEEKIGVLVDKEGVKKAVEELMGASDDAKERRRRVKELGESAHKAVEEGGSSHSNITYLLQDIMQQVKSKN</sequence>
<gene>
    <name type="primary">UGT73C4</name>
    <name type="ordered locus">At2g36770</name>
    <name type="ORF">F13K3.17</name>
</gene>
<accession>Q9ZQ97</accession>
<dbReference type="EC" id="2.4.1.-"/>
<dbReference type="EMBL" id="AC006282">
    <property type="protein sequence ID" value="AAD20153.1"/>
    <property type="molecule type" value="Genomic_DNA"/>
</dbReference>
<dbReference type="EMBL" id="CP002685">
    <property type="protein sequence ID" value="AEC09296.1"/>
    <property type="molecule type" value="Genomic_DNA"/>
</dbReference>
<dbReference type="EMBL" id="AY102121">
    <property type="protein sequence ID" value="AAM26689.1"/>
    <property type="molecule type" value="mRNA"/>
</dbReference>
<dbReference type="EMBL" id="BT002262">
    <property type="protein sequence ID" value="AAN72273.1"/>
    <property type="molecule type" value="mRNA"/>
</dbReference>
<dbReference type="PIR" id="E84784">
    <property type="entry name" value="E84784"/>
</dbReference>
<dbReference type="RefSeq" id="NP_181215.1">
    <property type="nucleotide sequence ID" value="NM_129232.4"/>
</dbReference>
<dbReference type="SMR" id="Q9ZQ97"/>
<dbReference type="FunCoup" id="Q9ZQ97">
    <property type="interactions" value="134"/>
</dbReference>
<dbReference type="STRING" id="3702.Q9ZQ97"/>
<dbReference type="CAZy" id="GT1">
    <property type="family name" value="Glycosyltransferase Family 1"/>
</dbReference>
<dbReference type="PaxDb" id="3702-AT2G36770.1"/>
<dbReference type="ProteomicsDB" id="228672"/>
<dbReference type="EnsemblPlants" id="AT2G36770.1">
    <property type="protein sequence ID" value="AT2G36770.1"/>
    <property type="gene ID" value="AT2G36770"/>
</dbReference>
<dbReference type="GeneID" id="818249"/>
<dbReference type="Gramene" id="AT2G36770.1">
    <property type="protein sequence ID" value="AT2G36770.1"/>
    <property type="gene ID" value="AT2G36770"/>
</dbReference>
<dbReference type="KEGG" id="ath:AT2G36770"/>
<dbReference type="Araport" id="AT2G36770"/>
<dbReference type="TAIR" id="AT2G36770"/>
<dbReference type="eggNOG" id="KOG1192">
    <property type="taxonomic scope" value="Eukaryota"/>
</dbReference>
<dbReference type="HOGENOM" id="CLU_001724_2_2_1"/>
<dbReference type="InParanoid" id="Q9ZQ97"/>
<dbReference type="OMA" id="WFLESSF"/>
<dbReference type="OrthoDB" id="5835829at2759"/>
<dbReference type="PhylomeDB" id="Q9ZQ97"/>
<dbReference type="BioCyc" id="ARA:AT2G36770-MONOMER"/>
<dbReference type="PRO" id="PR:Q9ZQ97"/>
<dbReference type="Proteomes" id="UP000006548">
    <property type="component" value="Chromosome 2"/>
</dbReference>
<dbReference type="ExpressionAtlas" id="Q9ZQ97">
    <property type="expression patterns" value="baseline and differential"/>
</dbReference>
<dbReference type="GO" id="GO:0046527">
    <property type="term" value="F:glucosyltransferase activity"/>
    <property type="evidence" value="ECO:0007669"/>
    <property type="project" value="UniProtKB-ARBA"/>
</dbReference>
<dbReference type="GO" id="GO:0008194">
    <property type="term" value="F:UDP-glycosyltransferase activity"/>
    <property type="evidence" value="ECO:0007669"/>
    <property type="project" value="InterPro"/>
</dbReference>
<dbReference type="CDD" id="cd03784">
    <property type="entry name" value="GT1_Gtf-like"/>
    <property type="match status" value="1"/>
</dbReference>
<dbReference type="FunFam" id="3.40.50.2000:FF:000047">
    <property type="entry name" value="Glycosyltransferase"/>
    <property type="match status" value="1"/>
</dbReference>
<dbReference type="FunFam" id="3.40.50.2000:FF:000071">
    <property type="entry name" value="Glycosyltransferase"/>
    <property type="match status" value="1"/>
</dbReference>
<dbReference type="Gene3D" id="3.40.50.2000">
    <property type="entry name" value="Glycogen Phosphorylase B"/>
    <property type="match status" value="2"/>
</dbReference>
<dbReference type="InterPro" id="IPR002213">
    <property type="entry name" value="UDP_glucos_trans"/>
</dbReference>
<dbReference type="InterPro" id="IPR035595">
    <property type="entry name" value="UDP_glycos_trans_CS"/>
</dbReference>
<dbReference type="PANTHER" id="PTHR48047">
    <property type="entry name" value="GLYCOSYLTRANSFERASE"/>
    <property type="match status" value="1"/>
</dbReference>
<dbReference type="PANTHER" id="PTHR48047:SF229">
    <property type="entry name" value="UDP-GLYCOSYLTRANSFERASE 73C3-RELATED"/>
    <property type="match status" value="1"/>
</dbReference>
<dbReference type="Pfam" id="PF00201">
    <property type="entry name" value="UDPGT"/>
    <property type="match status" value="1"/>
</dbReference>
<dbReference type="SUPFAM" id="SSF53756">
    <property type="entry name" value="UDP-Glycosyltransferase/glycogen phosphorylase"/>
    <property type="match status" value="1"/>
</dbReference>
<dbReference type="PROSITE" id="PS00375">
    <property type="entry name" value="UDPGT"/>
    <property type="match status" value="1"/>
</dbReference>
<name>U73C4_ARATH</name>
<keyword id="KW-0328">Glycosyltransferase</keyword>
<keyword id="KW-1185">Reference proteome</keyword>
<keyword id="KW-0808">Transferase</keyword>
<proteinExistence type="evidence at transcript level"/>
<comment type="similarity">
    <text evidence="3">Belongs to the UDP-glycosyltransferase family.</text>
</comment>
<feature type="chain" id="PRO_0000409078" description="UDP-glycosyltransferase 73C4">
    <location>
        <begin position="1"/>
        <end position="496"/>
    </location>
</feature>
<feature type="region of interest" description="Disordered" evidence="2">
    <location>
        <begin position="450"/>
        <end position="475"/>
    </location>
</feature>
<feature type="compositionally biased region" description="Basic and acidic residues" evidence="2">
    <location>
        <begin position="451"/>
        <end position="472"/>
    </location>
</feature>
<feature type="binding site" evidence="1">
    <location>
        <position position="297"/>
    </location>
    <ligand>
        <name>UDP-alpha-D-glucose</name>
        <dbReference type="ChEBI" id="CHEBI:58885"/>
    </ligand>
</feature>
<feature type="binding site" evidence="1">
    <location>
        <begin position="357"/>
        <end position="359"/>
    </location>
    <ligand>
        <name>UDP-alpha-D-glucose</name>
        <dbReference type="ChEBI" id="CHEBI:58885"/>
    </ligand>
</feature>
<feature type="binding site" evidence="1">
    <location>
        <begin position="374"/>
        <end position="382"/>
    </location>
    <ligand>
        <name>UDP-alpha-D-glucose</name>
        <dbReference type="ChEBI" id="CHEBI:58885"/>
    </ligand>
</feature>
<feature type="binding site" evidence="1">
    <location>
        <begin position="396"/>
        <end position="399"/>
    </location>
    <ligand>
        <name>UDP-alpha-D-glucose</name>
        <dbReference type="ChEBI" id="CHEBI:58885"/>
    </ligand>
</feature>
<evidence type="ECO:0000250" key="1"/>
<evidence type="ECO:0000256" key="2">
    <source>
        <dbReference type="SAM" id="MobiDB-lite"/>
    </source>
</evidence>
<evidence type="ECO:0000305" key="3"/>